<organism>
    <name type="scientific">Xanthomonas campestris pv. campestris (strain 8004)</name>
    <dbReference type="NCBI Taxonomy" id="314565"/>
    <lineage>
        <taxon>Bacteria</taxon>
        <taxon>Pseudomonadati</taxon>
        <taxon>Pseudomonadota</taxon>
        <taxon>Gammaproteobacteria</taxon>
        <taxon>Lysobacterales</taxon>
        <taxon>Lysobacteraceae</taxon>
        <taxon>Xanthomonas</taxon>
    </lineage>
</organism>
<comment type="function">
    <text evidence="1">Presumably involved in the processing and regular turnover of intracellular proteins. Catalyzes the removal of unsubstituted N-terminal amino acids from various peptides.</text>
</comment>
<comment type="catalytic activity">
    <reaction evidence="1">
        <text>Release of an N-terminal amino acid, Xaa-|-Yaa-, in which Xaa is preferably Leu, but may be other amino acids including Pro although not Arg or Lys, and Yaa may be Pro. Amino acid amides and methyl esters are also readily hydrolyzed, but rates on arylamides are exceedingly low.</text>
        <dbReference type="EC" id="3.4.11.1"/>
    </reaction>
</comment>
<comment type="catalytic activity">
    <reaction evidence="1">
        <text>Release of an N-terminal amino acid, preferentially leucine, but not glutamic or aspartic acids.</text>
        <dbReference type="EC" id="3.4.11.10"/>
    </reaction>
</comment>
<comment type="cofactor">
    <cofactor evidence="1">
        <name>Mn(2+)</name>
        <dbReference type="ChEBI" id="CHEBI:29035"/>
    </cofactor>
    <text evidence="1">Binds 2 manganese ions per subunit.</text>
</comment>
<comment type="subcellular location">
    <subcellularLocation>
        <location evidence="1">Cytoplasm</location>
    </subcellularLocation>
</comment>
<comment type="similarity">
    <text evidence="1">Belongs to the peptidase M17 family.</text>
</comment>
<gene>
    <name evidence="1" type="primary">pepA</name>
    <name type="ordered locus">XC_3585</name>
</gene>
<proteinExistence type="inferred from homology"/>
<name>AMPA_XANC8</name>
<protein>
    <recommendedName>
        <fullName evidence="1">Probable cytosol aminopeptidase</fullName>
        <ecNumber evidence="1">3.4.11.1</ecNumber>
    </recommendedName>
    <alternativeName>
        <fullName evidence="1">Leucine aminopeptidase</fullName>
        <shortName evidence="1">LAP</shortName>
        <ecNumber evidence="1">3.4.11.10</ecNumber>
    </alternativeName>
    <alternativeName>
        <fullName evidence="1">Leucyl aminopeptidase</fullName>
    </alternativeName>
</protein>
<accession>Q4UQP6</accession>
<dbReference type="EC" id="3.4.11.1" evidence="1"/>
<dbReference type="EC" id="3.4.11.10" evidence="1"/>
<dbReference type="EMBL" id="CP000050">
    <property type="protein sequence ID" value="AAY50627.1"/>
    <property type="molecule type" value="Genomic_DNA"/>
</dbReference>
<dbReference type="RefSeq" id="WP_011035890.1">
    <property type="nucleotide sequence ID" value="NZ_CP155948.1"/>
</dbReference>
<dbReference type="SMR" id="Q4UQP6"/>
<dbReference type="KEGG" id="xcb:XC_3585"/>
<dbReference type="HOGENOM" id="CLU_013734_2_2_6"/>
<dbReference type="Proteomes" id="UP000000420">
    <property type="component" value="Chromosome"/>
</dbReference>
<dbReference type="GO" id="GO:0005737">
    <property type="term" value="C:cytoplasm"/>
    <property type="evidence" value="ECO:0007669"/>
    <property type="project" value="UniProtKB-SubCell"/>
</dbReference>
<dbReference type="GO" id="GO:0030145">
    <property type="term" value="F:manganese ion binding"/>
    <property type="evidence" value="ECO:0007669"/>
    <property type="project" value="UniProtKB-UniRule"/>
</dbReference>
<dbReference type="GO" id="GO:0070006">
    <property type="term" value="F:metalloaminopeptidase activity"/>
    <property type="evidence" value="ECO:0007669"/>
    <property type="project" value="InterPro"/>
</dbReference>
<dbReference type="GO" id="GO:0006508">
    <property type="term" value="P:proteolysis"/>
    <property type="evidence" value="ECO:0007669"/>
    <property type="project" value="UniProtKB-KW"/>
</dbReference>
<dbReference type="CDD" id="cd00433">
    <property type="entry name" value="Peptidase_M17"/>
    <property type="match status" value="1"/>
</dbReference>
<dbReference type="Gene3D" id="3.40.220.10">
    <property type="entry name" value="Leucine Aminopeptidase, subunit E, domain 1"/>
    <property type="match status" value="1"/>
</dbReference>
<dbReference type="Gene3D" id="3.40.630.10">
    <property type="entry name" value="Zn peptidases"/>
    <property type="match status" value="1"/>
</dbReference>
<dbReference type="HAMAP" id="MF_00181">
    <property type="entry name" value="Cytosol_peptidase_M17"/>
    <property type="match status" value="1"/>
</dbReference>
<dbReference type="InterPro" id="IPR011356">
    <property type="entry name" value="Leucine_aapep/pepB"/>
</dbReference>
<dbReference type="InterPro" id="IPR043472">
    <property type="entry name" value="Macro_dom-like"/>
</dbReference>
<dbReference type="InterPro" id="IPR000819">
    <property type="entry name" value="Peptidase_M17_C"/>
</dbReference>
<dbReference type="InterPro" id="IPR023042">
    <property type="entry name" value="Peptidase_M17_leu_NH2_pept"/>
</dbReference>
<dbReference type="InterPro" id="IPR008283">
    <property type="entry name" value="Peptidase_M17_N"/>
</dbReference>
<dbReference type="NCBIfam" id="NF002074">
    <property type="entry name" value="PRK00913.1-4"/>
    <property type="match status" value="1"/>
</dbReference>
<dbReference type="PANTHER" id="PTHR11963:SF23">
    <property type="entry name" value="CYTOSOL AMINOPEPTIDASE"/>
    <property type="match status" value="1"/>
</dbReference>
<dbReference type="PANTHER" id="PTHR11963">
    <property type="entry name" value="LEUCINE AMINOPEPTIDASE-RELATED"/>
    <property type="match status" value="1"/>
</dbReference>
<dbReference type="Pfam" id="PF00883">
    <property type="entry name" value="Peptidase_M17"/>
    <property type="match status" value="1"/>
</dbReference>
<dbReference type="Pfam" id="PF02789">
    <property type="entry name" value="Peptidase_M17_N"/>
    <property type="match status" value="1"/>
</dbReference>
<dbReference type="PRINTS" id="PR00481">
    <property type="entry name" value="LAMNOPPTDASE"/>
</dbReference>
<dbReference type="SUPFAM" id="SSF52949">
    <property type="entry name" value="Macro domain-like"/>
    <property type="match status" value="1"/>
</dbReference>
<dbReference type="SUPFAM" id="SSF53187">
    <property type="entry name" value="Zn-dependent exopeptidases"/>
    <property type="match status" value="1"/>
</dbReference>
<dbReference type="PROSITE" id="PS00631">
    <property type="entry name" value="CYTOSOL_AP"/>
    <property type="match status" value="1"/>
</dbReference>
<keyword id="KW-0031">Aminopeptidase</keyword>
<keyword id="KW-0963">Cytoplasm</keyword>
<keyword id="KW-0378">Hydrolase</keyword>
<keyword id="KW-0464">Manganese</keyword>
<keyword id="KW-0479">Metal-binding</keyword>
<keyword id="KW-0645">Protease</keyword>
<evidence type="ECO:0000255" key="1">
    <source>
        <dbReference type="HAMAP-Rule" id="MF_00181"/>
    </source>
</evidence>
<reference key="1">
    <citation type="journal article" date="2005" name="Genome Res.">
        <title>Comparative and functional genomic analyses of the pathogenicity of phytopathogen Xanthomonas campestris pv. campestris.</title>
        <authorList>
            <person name="Qian W."/>
            <person name="Jia Y."/>
            <person name="Ren S.-X."/>
            <person name="He Y.-Q."/>
            <person name="Feng J.-X."/>
            <person name="Lu L.-F."/>
            <person name="Sun Q."/>
            <person name="Ying G."/>
            <person name="Tang D.-J."/>
            <person name="Tang H."/>
            <person name="Wu W."/>
            <person name="Hao P."/>
            <person name="Wang L."/>
            <person name="Jiang B.-L."/>
            <person name="Zeng S."/>
            <person name="Gu W.-Y."/>
            <person name="Lu G."/>
            <person name="Rong L."/>
            <person name="Tian Y."/>
            <person name="Yao Z."/>
            <person name="Fu G."/>
            <person name="Chen B."/>
            <person name="Fang R."/>
            <person name="Qiang B."/>
            <person name="Chen Z."/>
            <person name="Zhao G.-P."/>
            <person name="Tang J.-L."/>
            <person name="He C."/>
        </authorList>
    </citation>
    <scope>NUCLEOTIDE SEQUENCE [LARGE SCALE GENOMIC DNA]</scope>
    <source>
        <strain>8004</strain>
    </source>
</reference>
<feature type="chain" id="PRO_1000020000" description="Probable cytosol aminopeptidase">
    <location>
        <begin position="1"/>
        <end position="493"/>
    </location>
</feature>
<feature type="active site" evidence="1">
    <location>
        <position position="274"/>
    </location>
</feature>
<feature type="active site" evidence="1">
    <location>
        <position position="348"/>
    </location>
</feature>
<feature type="binding site" evidence="1">
    <location>
        <position position="262"/>
    </location>
    <ligand>
        <name>Mn(2+)</name>
        <dbReference type="ChEBI" id="CHEBI:29035"/>
        <label>2</label>
    </ligand>
</feature>
<feature type="binding site" evidence="1">
    <location>
        <position position="267"/>
    </location>
    <ligand>
        <name>Mn(2+)</name>
        <dbReference type="ChEBI" id="CHEBI:29035"/>
        <label>1</label>
    </ligand>
</feature>
<feature type="binding site" evidence="1">
    <location>
        <position position="267"/>
    </location>
    <ligand>
        <name>Mn(2+)</name>
        <dbReference type="ChEBI" id="CHEBI:29035"/>
        <label>2</label>
    </ligand>
</feature>
<feature type="binding site" evidence="1">
    <location>
        <position position="285"/>
    </location>
    <ligand>
        <name>Mn(2+)</name>
        <dbReference type="ChEBI" id="CHEBI:29035"/>
        <label>2</label>
    </ligand>
</feature>
<feature type="binding site" evidence="1">
    <location>
        <position position="344"/>
    </location>
    <ligand>
        <name>Mn(2+)</name>
        <dbReference type="ChEBI" id="CHEBI:29035"/>
        <label>1</label>
    </ligand>
</feature>
<feature type="binding site" evidence="1">
    <location>
        <position position="346"/>
    </location>
    <ligand>
        <name>Mn(2+)</name>
        <dbReference type="ChEBI" id="CHEBI:29035"/>
        <label>1</label>
    </ligand>
</feature>
<feature type="binding site" evidence="1">
    <location>
        <position position="346"/>
    </location>
    <ligand>
        <name>Mn(2+)</name>
        <dbReference type="ChEBI" id="CHEBI:29035"/>
        <label>2</label>
    </ligand>
</feature>
<sequence length="493" mass="51591">MALQFTLNQDAPASAHVDCIVVGAFADKTLSPAAQALDSASQGRLTALVARGDVATKTGTTSLVHDLPGVQAPRVLVVGLGDAAKFGVAPYLKAIGDAARALKTGPIGTALLTLTELPVKARDAAWNIRQAVIVSDHAAYRYTATLGKKKVDDTGLTTLAIAGDDARALAVGIATAEGVEFARELGNLPPNYCTPAYLAETAAAFAGKFPGAEAEILDEQQMEALGMGSLLSVARGSANRPRLIVLKWNGGGEARPYVLVGKGITFDTGGVNLKTQGGIEEMKYDMCGGANVIGTFVATVKAELPINLVVVVPAVENAIDGNAYRPSDVITSMSGKTIEVGNTDAEGRLILCDALTYAERFNPEALVDVATLTGACMVALGHQTAGLMSKHDDLANELLAAGEHVFDRAWRLPLWDEYQGLLDSTFADVYNIGGRWGGAITAGCFLSRFTENQRWAHLDIAGVASDEGKRGMATGRPVGLLTQWLLDRAEGGN</sequence>